<evidence type="ECO:0000250" key="1">
    <source>
        <dbReference type="UniProtKB" id="P00962"/>
    </source>
</evidence>
<evidence type="ECO:0000250" key="2">
    <source>
        <dbReference type="UniProtKB" id="P47897"/>
    </source>
</evidence>
<evidence type="ECO:0000255" key="3">
    <source>
        <dbReference type="RuleBase" id="RU363037"/>
    </source>
</evidence>
<evidence type="ECO:0000269" key="4">
    <source>
    </source>
</evidence>
<evidence type="ECO:0000312" key="5">
    <source>
        <dbReference type="EMBL" id="AAH82002.1"/>
    </source>
</evidence>
<evidence type="ECO:0000312" key="6">
    <source>
        <dbReference type="RGD" id="1359448"/>
    </source>
</evidence>
<keyword id="KW-0007">Acetylation</keyword>
<keyword id="KW-0030">Aminoacyl-tRNA synthetase</keyword>
<keyword id="KW-0067">ATP-binding</keyword>
<keyword id="KW-0963">Cytoplasm</keyword>
<keyword id="KW-0436">Ligase</keyword>
<keyword id="KW-0547">Nucleotide-binding</keyword>
<keyword id="KW-0597">Phosphoprotein</keyword>
<keyword id="KW-0648">Protein biosynthesis</keyword>
<keyword id="KW-1185">Reference proteome</keyword>
<gene>
    <name type="primary">Qars1</name>
    <name evidence="6" type="synonym">Qars</name>
</gene>
<name>SYQ_RAT</name>
<organism evidence="5">
    <name type="scientific">Rattus norvegicus</name>
    <name type="common">Rat</name>
    <dbReference type="NCBI Taxonomy" id="10116"/>
    <lineage>
        <taxon>Eukaryota</taxon>
        <taxon>Metazoa</taxon>
        <taxon>Chordata</taxon>
        <taxon>Craniata</taxon>
        <taxon>Vertebrata</taxon>
        <taxon>Euteleostomi</taxon>
        <taxon>Mammalia</taxon>
        <taxon>Eutheria</taxon>
        <taxon>Euarchontoglires</taxon>
        <taxon>Glires</taxon>
        <taxon>Rodentia</taxon>
        <taxon>Myomorpha</taxon>
        <taxon>Muroidea</taxon>
        <taxon>Muridae</taxon>
        <taxon>Murinae</taxon>
        <taxon>Rattus</taxon>
    </lineage>
</organism>
<proteinExistence type="evidence at protein level"/>
<accession>Q66H61</accession>
<accession>F1LPA0</accession>
<dbReference type="EC" id="6.1.1.18" evidence="2"/>
<dbReference type="EMBL" id="AC107280">
    <property type="status" value="NOT_ANNOTATED_CDS"/>
    <property type="molecule type" value="Genomic_DNA"/>
</dbReference>
<dbReference type="EMBL" id="AC128721">
    <property type="status" value="NOT_ANNOTATED_CDS"/>
    <property type="molecule type" value="Genomic_DNA"/>
</dbReference>
<dbReference type="EMBL" id="BC082002">
    <property type="protein sequence ID" value="AAH82002.1"/>
    <property type="molecule type" value="mRNA"/>
</dbReference>
<dbReference type="EMBL" id="CH473954">
    <property type="protein sequence ID" value="EDL77164.1"/>
    <property type="molecule type" value="Genomic_DNA"/>
</dbReference>
<dbReference type="RefSeq" id="NP_001007625.1">
    <property type="nucleotide sequence ID" value="NM_001007624.1"/>
</dbReference>
<dbReference type="SMR" id="Q66H61"/>
<dbReference type="FunCoup" id="Q66H61">
    <property type="interactions" value="2402"/>
</dbReference>
<dbReference type="STRING" id="10116.ENSRNOP00000071398"/>
<dbReference type="GlyGen" id="Q66H61">
    <property type="glycosylation" value="1 site"/>
</dbReference>
<dbReference type="iPTMnet" id="Q66H61"/>
<dbReference type="PhosphoSitePlus" id="Q66H61"/>
<dbReference type="jPOST" id="Q66H61"/>
<dbReference type="PaxDb" id="10116-ENSRNOP00000060418"/>
<dbReference type="GeneID" id="290868"/>
<dbReference type="KEGG" id="rno:290868"/>
<dbReference type="AGR" id="RGD:1359448"/>
<dbReference type="CTD" id="5859"/>
<dbReference type="RGD" id="1359448">
    <property type="gene designation" value="Qars1"/>
</dbReference>
<dbReference type="VEuPathDB" id="HostDB:ENSRNOG00000060912"/>
<dbReference type="eggNOG" id="KOG1148">
    <property type="taxonomic scope" value="Eukaryota"/>
</dbReference>
<dbReference type="HOGENOM" id="CLU_001882_2_3_1"/>
<dbReference type="InParanoid" id="Q66H61"/>
<dbReference type="OrthoDB" id="5907at9989"/>
<dbReference type="PhylomeDB" id="Q66H61"/>
<dbReference type="TreeFam" id="TF105683"/>
<dbReference type="Reactome" id="R-RNO-9856649">
    <property type="pathway name" value="Transcriptional and post-translational regulation of MITF-M expression and activity"/>
</dbReference>
<dbReference type="PRO" id="PR:Q66H61"/>
<dbReference type="Proteomes" id="UP000002494">
    <property type="component" value="Chromosome 8"/>
</dbReference>
<dbReference type="Proteomes" id="UP000234681">
    <property type="component" value="Chromosome 8"/>
</dbReference>
<dbReference type="Bgee" id="ENSRNOG00000060912">
    <property type="expression patterns" value="Expressed in skeletal muscle tissue and 20 other cell types or tissues"/>
</dbReference>
<dbReference type="GO" id="GO:0017101">
    <property type="term" value="C:aminoacyl-tRNA synthetase multienzyme complex"/>
    <property type="evidence" value="ECO:0000250"/>
    <property type="project" value="UniProtKB"/>
</dbReference>
<dbReference type="GO" id="GO:0005737">
    <property type="term" value="C:cytoplasm"/>
    <property type="evidence" value="ECO:0000266"/>
    <property type="project" value="RGD"/>
</dbReference>
<dbReference type="GO" id="GO:0005829">
    <property type="term" value="C:cytosol"/>
    <property type="evidence" value="ECO:0000266"/>
    <property type="project" value="RGD"/>
</dbReference>
<dbReference type="GO" id="GO:0032991">
    <property type="term" value="C:protein-containing complex"/>
    <property type="evidence" value="ECO:0000266"/>
    <property type="project" value="RGD"/>
</dbReference>
<dbReference type="GO" id="GO:0005524">
    <property type="term" value="F:ATP binding"/>
    <property type="evidence" value="ECO:0007669"/>
    <property type="project" value="UniProtKB-KW"/>
</dbReference>
<dbReference type="GO" id="GO:0004819">
    <property type="term" value="F:glutamine-tRNA ligase activity"/>
    <property type="evidence" value="ECO:0000250"/>
    <property type="project" value="UniProtKB"/>
</dbReference>
<dbReference type="GO" id="GO:0019901">
    <property type="term" value="F:protein kinase binding"/>
    <property type="evidence" value="ECO:0000266"/>
    <property type="project" value="RGD"/>
</dbReference>
<dbReference type="GO" id="GO:0004860">
    <property type="term" value="F:protein kinase inhibitor activity"/>
    <property type="evidence" value="ECO:0000266"/>
    <property type="project" value="RGD"/>
</dbReference>
<dbReference type="GO" id="GO:0007420">
    <property type="term" value="P:brain development"/>
    <property type="evidence" value="ECO:0000266"/>
    <property type="project" value="RGD"/>
</dbReference>
<dbReference type="GO" id="GO:0006425">
    <property type="term" value="P:glutaminyl-tRNA aminoacylation"/>
    <property type="evidence" value="ECO:0000250"/>
    <property type="project" value="UniProtKB"/>
</dbReference>
<dbReference type="GO" id="GO:2001234">
    <property type="term" value="P:negative regulation of apoptotic signaling pathway"/>
    <property type="evidence" value="ECO:0000266"/>
    <property type="project" value="RGD"/>
</dbReference>
<dbReference type="GO" id="GO:0045892">
    <property type="term" value="P:negative regulation of DNA-templated transcription"/>
    <property type="evidence" value="ECO:0000266"/>
    <property type="project" value="RGD"/>
</dbReference>
<dbReference type="GO" id="GO:0032873">
    <property type="term" value="P:negative regulation of stress-activated MAPK cascade"/>
    <property type="evidence" value="ECO:0000266"/>
    <property type="project" value="RGD"/>
</dbReference>
<dbReference type="CDD" id="cd00807">
    <property type="entry name" value="GlnRS_core"/>
    <property type="match status" value="1"/>
</dbReference>
<dbReference type="FunFam" id="1.10.8.1290:FF:000001">
    <property type="entry name" value="Glutamine--tRNA ligase"/>
    <property type="match status" value="1"/>
</dbReference>
<dbReference type="FunFam" id="1.10.10.2420:FF:000001">
    <property type="entry name" value="Glutamine--tRNA ligase cytoplasmic"/>
    <property type="match status" value="1"/>
</dbReference>
<dbReference type="FunFam" id="3.40.50.620:FF:000049">
    <property type="entry name" value="Probable glutamine--tRNA ligase"/>
    <property type="match status" value="1"/>
</dbReference>
<dbReference type="FunFam" id="2.40.240.10:FF:000008">
    <property type="entry name" value="probable glutamine--tRNA ligase"/>
    <property type="match status" value="1"/>
</dbReference>
<dbReference type="FunFam" id="2.40.240.10:FF:000006">
    <property type="entry name" value="Putative glutamine--tRNA ligase"/>
    <property type="match status" value="1"/>
</dbReference>
<dbReference type="Gene3D" id="1.10.10.2420">
    <property type="match status" value="1"/>
</dbReference>
<dbReference type="Gene3D" id="1.10.8.1290">
    <property type="entry name" value="Glutaminyl-tRNA synthetase, non-specific RNA binding region part 1, domain 1"/>
    <property type="match status" value="1"/>
</dbReference>
<dbReference type="Gene3D" id="3.40.50.620">
    <property type="entry name" value="HUPs"/>
    <property type="match status" value="1"/>
</dbReference>
<dbReference type="Gene3D" id="2.40.240.10">
    <property type="entry name" value="Ribosomal Protein L25, Chain P"/>
    <property type="match status" value="2"/>
</dbReference>
<dbReference type="InterPro" id="IPR001412">
    <property type="entry name" value="aa-tRNA-synth_I_CS"/>
</dbReference>
<dbReference type="InterPro" id="IPR004514">
    <property type="entry name" value="Gln-tRNA-synth"/>
</dbReference>
<dbReference type="InterPro" id="IPR007638">
    <property type="entry name" value="Gln-tRNA-synth_Ib_RNA-bd_2"/>
</dbReference>
<dbReference type="InterPro" id="IPR007639">
    <property type="entry name" value="Gln-tRNA-synth_Ib_RNA-bd_N"/>
</dbReference>
<dbReference type="InterPro" id="IPR042558">
    <property type="entry name" value="Gln-tRNA-synth_Ib_RNA-bd_N_1"/>
</dbReference>
<dbReference type="InterPro" id="IPR042559">
    <property type="entry name" value="Gln-tRNA-synth_Ib_RNA-bd_N_2"/>
</dbReference>
<dbReference type="InterPro" id="IPR050132">
    <property type="entry name" value="Gln/Glu-tRNA_Ligase"/>
</dbReference>
<dbReference type="InterPro" id="IPR000924">
    <property type="entry name" value="Glu/Gln-tRNA-synth"/>
</dbReference>
<dbReference type="InterPro" id="IPR020058">
    <property type="entry name" value="Glu/Gln-tRNA-synth_Ib_cat-dom"/>
</dbReference>
<dbReference type="InterPro" id="IPR020059">
    <property type="entry name" value="Glu/Gln-tRNA-synth_Ib_codon-bd"/>
</dbReference>
<dbReference type="InterPro" id="IPR020056">
    <property type="entry name" value="Rbsml_bL25/Gln-tRNA_synth_N"/>
</dbReference>
<dbReference type="InterPro" id="IPR011035">
    <property type="entry name" value="Ribosomal_bL25/Gln-tRNA_synth"/>
</dbReference>
<dbReference type="InterPro" id="IPR014729">
    <property type="entry name" value="Rossmann-like_a/b/a_fold"/>
</dbReference>
<dbReference type="InterPro" id="IPR049437">
    <property type="entry name" value="tRNA-synt_1c_C2"/>
</dbReference>
<dbReference type="NCBIfam" id="TIGR00440">
    <property type="entry name" value="glnS"/>
    <property type="match status" value="1"/>
</dbReference>
<dbReference type="PANTHER" id="PTHR43097:SF4">
    <property type="entry name" value="GLUTAMINE--TRNA LIGASE"/>
    <property type="match status" value="1"/>
</dbReference>
<dbReference type="PANTHER" id="PTHR43097">
    <property type="entry name" value="GLUTAMINE-TRNA LIGASE"/>
    <property type="match status" value="1"/>
</dbReference>
<dbReference type="Pfam" id="PF00749">
    <property type="entry name" value="tRNA-synt_1c"/>
    <property type="match status" value="1"/>
</dbReference>
<dbReference type="Pfam" id="PF03950">
    <property type="entry name" value="tRNA-synt_1c_C"/>
    <property type="match status" value="1"/>
</dbReference>
<dbReference type="Pfam" id="PF20974">
    <property type="entry name" value="tRNA-synt_1c_C2"/>
    <property type="match status" value="1"/>
</dbReference>
<dbReference type="Pfam" id="PF04558">
    <property type="entry name" value="tRNA_synt_1c_R1"/>
    <property type="match status" value="1"/>
</dbReference>
<dbReference type="Pfam" id="PF04557">
    <property type="entry name" value="tRNA_synt_1c_R2"/>
    <property type="match status" value="1"/>
</dbReference>
<dbReference type="PRINTS" id="PR00987">
    <property type="entry name" value="TRNASYNTHGLU"/>
</dbReference>
<dbReference type="SUPFAM" id="SSF52374">
    <property type="entry name" value="Nucleotidylyl transferase"/>
    <property type="match status" value="1"/>
</dbReference>
<dbReference type="SUPFAM" id="SSF50715">
    <property type="entry name" value="Ribosomal protein L25-like"/>
    <property type="match status" value="1"/>
</dbReference>
<dbReference type="PROSITE" id="PS00178">
    <property type="entry name" value="AA_TRNA_LIGASE_I"/>
    <property type="match status" value="1"/>
</dbReference>
<reference key="1">
    <citation type="journal article" date="2004" name="Nature">
        <title>Genome sequence of the Brown Norway rat yields insights into mammalian evolution.</title>
        <authorList>
            <person name="Gibbs R.A."/>
            <person name="Weinstock G.M."/>
            <person name="Metzker M.L."/>
            <person name="Muzny D.M."/>
            <person name="Sodergren E.J."/>
            <person name="Scherer S."/>
            <person name="Scott G."/>
            <person name="Steffen D."/>
            <person name="Worley K.C."/>
            <person name="Burch P.E."/>
            <person name="Okwuonu G."/>
            <person name="Hines S."/>
            <person name="Lewis L."/>
            <person name="Deramo C."/>
            <person name="Delgado O."/>
            <person name="Dugan-Rocha S."/>
            <person name="Miner G."/>
            <person name="Morgan M."/>
            <person name="Hawes A."/>
            <person name="Gill R."/>
            <person name="Holt R.A."/>
            <person name="Adams M.D."/>
            <person name="Amanatides P.G."/>
            <person name="Baden-Tillson H."/>
            <person name="Barnstead M."/>
            <person name="Chin S."/>
            <person name="Evans C.A."/>
            <person name="Ferriera S."/>
            <person name="Fosler C."/>
            <person name="Glodek A."/>
            <person name="Gu Z."/>
            <person name="Jennings D."/>
            <person name="Kraft C.L."/>
            <person name="Nguyen T."/>
            <person name="Pfannkoch C.M."/>
            <person name="Sitter C."/>
            <person name="Sutton G.G."/>
            <person name="Venter J.C."/>
            <person name="Woodage T."/>
            <person name="Smith D."/>
            <person name="Lee H.-M."/>
            <person name="Gustafson E."/>
            <person name="Cahill P."/>
            <person name="Kana A."/>
            <person name="Doucette-Stamm L."/>
            <person name="Weinstock K."/>
            <person name="Fechtel K."/>
            <person name="Weiss R.B."/>
            <person name="Dunn D.M."/>
            <person name="Green E.D."/>
            <person name="Blakesley R.W."/>
            <person name="Bouffard G.G."/>
            <person name="De Jong P.J."/>
            <person name="Osoegawa K."/>
            <person name="Zhu B."/>
            <person name="Marra M."/>
            <person name="Schein J."/>
            <person name="Bosdet I."/>
            <person name="Fjell C."/>
            <person name="Jones S."/>
            <person name="Krzywinski M."/>
            <person name="Mathewson C."/>
            <person name="Siddiqui A."/>
            <person name="Wye N."/>
            <person name="McPherson J."/>
            <person name="Zhao S."/>
            <person name="Fraser C.M."/>
            <person name="Shetty J."/>
            <person name="Shatsman S."/>
            <person name="Geer K."/>
            <person name="Chen Y."/>
            <person name="Abramzon S."/>
            <person name="Nierman W.C."/>
            <person name="Havlak P.H."/>
            <person name="Chen R."/>
            <person name="Durbin K.J."/>
            <person name="Egan A."/>
            <person name="Ren Y."/>
            <person name="Song X.-Z."/>
            <person name="Li B."/>
            <person name="Liu Y."/>
            <person name="Qin X."/>
            <person name="Cawley S."/>
            <person name="Cooney A.J."/>
            <person name="D'Souza L.M."/>
            <person name="Martin K."/>
            <person name="Wu J.Q."/>
            <person name="Gonzalez-Garay M.L."/>
            <person name="Jackson A.R."/>
            <person name="Kalafus K.J."/>
            <person name="McLeod M.P."/>
            <person name="Milosavljevic A."/>
            <person name="Virk D."/>
            <person name="Volkov A."/>
            <person name="Wheeler D.A."/>
            <person name="Zhang Z."/>
            <person name="Bailey J.A."/>
            <person name="Eichler E.E."/>
            <person name="Tuzun E."/>
            <person name="Birney E."/>
            <person name="Mongin E."/>
            <person name="Ureta-Vidal A."/>
            <person name="Woodwark C."/>
            <person name="Zdobnov E."/>
            <person name="Bork P."/>
            <person name="Suyama M."/>
            <person name="Torrents D."/>
            <person name="Alexandersson M."/>
            <person name="Trask B.J."/>
            <person name="Young J.M."/>
            <person name="Huang H."/>
            <person name="Wang H."/>
            <person name="Xing H."/>
            <person name="Daniels S."/>
            <person name="Gietzen D."/>
            <person name="Schmidt J."/>
            <person name="Stevens K."/>
            <person name="Vitt U."/>
            <person name="Wingrove J."/>
            <person name="Camara F."/>
            <person name="Mar Alba M."/>
            <person name="Abril J.F."/>
            <person name="Guigo R."/>
            <person name="Smit A."/>
            <person name="Dubchak I."/>
            <person name="Rubin E.M."/>
            <person name="Couronne O."/>
            <person name="Poliakov A."/>
            <person name="Huebner N."/>
            <person name="Ganten D."/>
            <person name="Goesele C."/>
            <person name="Hummel O."/>
            <person name="Kreitler T."/>
            <person name="Lee Y.-A."/>
            <person name="Monti J."/>
            <person name="Schulz H."/>
            <person name="Zimdahl H."/>
            <person name="Himmelbauer H."/>
            <person name="Lehrach H."/>
            <person name="Jacob H.J."/>
            <person name="Bromberg S."/>
            <person name="Gullings-Handley J."/>
            <person name="Jensen-Seaman M.I."/>
            <person name="Kwitek A.E."/>
            <person name="Lazar J."/>
            <person name="Pasko D."/>
            <person name="Tonellato P.J."/>
            <person name="Twigger S."/>
            <person name="Ponting C.P."/>
            <person name="Duarte J.M."/>
            <person name="Rice S."/>
            <person name="Goodstadt L."/>
            <person name="Beatson S.A."/>
            <person name="Emes R.D."/>
            <person name="Winter E.E."/>
            <person name="Webber C."/>
            <person name="Brandt P."/>
            <person name="Nyakatura G."/>
            <person name="Adetobi M."/>
            <person name="Chiaromonte F."/>
            <person name="Elnitski L."/>
            <person name="Eswara P."/>
            <person name="Hardison R.C."/>
            <person name="Hou M."/>
            <person name="Kolbe D."/>
            <person name="Makova K."/>
            <person name="Miller W."/>
            <person name="Nekrutenko A."/>
            <person name="Riemer C."/>
            <person name="Schwartz S."/>
            <person name="Taylor J."/>
            <person name="Yang S."/>
            <person name="Zhang Y."/>
            <person name="Lindpaintner K."/>
            <person name="Andrews T.D."/>
            <person name="Caccamo M."/>
            <person name="Clamp M."/>
            <person name="Clarke L."/>
            <person name="Curwen V."/>
            <person name="Durbin R.M."/>
            <person name="Eyras E."/>
            <person name="Searle S.M."/>
            <person name="Cooper G.M."/>
            <person name="Batzoglou S."/>
            <person name="Brudno M."/>
            <person name="Sidow A."/>
            <person name="Stone E.A."/>
            <person name="Payseur B.A."/>
            <person name="Bourque G."/>
            <person name="Lopez-Otin C."/>
            <person name="Puente X.S."/>
            <person name="Chakrabarti K."/>
            <person name="Chatterji S."/>
            <person name="Dewey C."/>
            <person name="Pachter L."/>
            <person name="Bray N."/>
            <person name="Yap V.B."/>
            <person name="Caspi A."/>
            <person name="Tesler G."/>
            <person name="Pevzner P.A."/>
            <person name="Haussler D."/>
            <person name="Roskin K.M."/>
            <person name="Baertsch R."/>
            <person name="Clawson H."/>
            <person name="Furey T.S."/>
            <person name="Hinrichs A.S."/>
            <person name="Karolchik D."/>
            <person name="Kent W.J."/>
            <person name="Rosenbloom K.R."/>
            <person name="Trumbower H."/>
            <person name="Weirauch M."/>
            <person name="Cooper D.N."/>
            <person name="Stenson P.D."/>
            <person name="Ma B."/>
            <person name="Brent M."/>
            <person name="Arumugam M."/>
            <person name="Shteynberg D."/>
            <person name="Copley R.R."/>
            <person name="Taylor M.S."/>
            <person name="Riethman H."/>
            <person name="Mudunuri U."/>
            <person name="Peterson J."/>
            <person name="Guyer M."/>
            <person name="Felsenfeld A."/>
            <person name="Old S."/>
            <person name="Mockrin S."/>
            <person name="Collins F.S."/>
        </authorList>
    </citation>
    <scope>NUCLEOTIDE SEQUENCE [LARGE SCALE GENOMIC DNA]</scope>
    <source>
        <strain>Brown Norway</strain>
    </source>
</reference>
<reference key="2">
    <citation type="submission" date="2005-09" db="EMBL/GenBank/DDBJ databases">
        <authorList>
            <person name="Mural R.J."/>
            <person name="Adams M.D."/>
            <person name="Myers E.W."/>
            <person name="Smith H.O."/>
            <person name="Venter J.C."/>
        </authorList>
    </citation>
    <scope>NUCLEOTIDE SEQUENCE [LARGE SCALE GENOMIC DNA]</scope>
    <source>
        <strain>Brown Norway</strain>
    </source>
</reference>
<reference key="3">
    <citation type="journal article" date="2004" name="Genome Res.">
        <title>The status, quality, and expansion of the NIH full-length cDNA project: the Mammalian Gene Collection (MGC).</title>
        <authorList>
            <consortium name="The MGC Project Team"/>
        </authorList>
    </citation>
    <scope>NUCLEOTIDE SEQUENCE [LARGE SCALE MRNA]</scope>
    <source>
        <tissue>Testis</tissue>
    </source>
</reference>
<reference key="4">
    <citation type="journal article" date="2015" name="J. Mol. Histol.">
        <title>Expression profile of aminoacyl-tRNA synthetases in dorsal root ganglion neurons after peripheral nerve injury.</title>
        <authorList>
            <person name="Park B.S."/>
            <person name="Jo H.W."/>
            <person name="Jung J."/>
        </authorList>
    </citation>
    <scope>TISSUE SPECIFICITY</scope>
    <scope>INDUCTION BY PERIPHERAL NERVE INJURY</scope>
</reference>
<feature type="initiator methionine" description="Removed" evidence="2">
    <location>
        <position position="1"/>
    </location>
</feature>
<feature type="chain" id="PRO_0000441173" description="Glutamine--tRNA ligase">
    <location>
        <begin position="2"/>
        <end position="775"/>
    </location>
</feature>
<feature type="binding site" evidence="1">
    <location>
        <begin position="271"/>
        <end position="273"/>
    </location>
    <ligand>
        <name>ATP</name>
        <dbReference type="ChEBI" id="CHEBI:30616"/>
    </ligand>
</feature>
<feature type="binding site" evidence="1">
    <location>
        <begin position="277"/>
        <end position="283"/>
    </location>
    <ligand>
        <name>ATP</name>
        <dbReference type="ChEBI" id="CHEBI:30616"/>
    </ligand>
</feature>
<feature type="binding site" evidence="1">
    <location>
        <position position="303"/>
    </location>
    <ligand>
        <name>L-glutamine</name>
        <dbReference type="ChEBI" id="CHEBI:58359"/>
    </ligand>
</feature>
<feature type="binding site" evidence="1">
    <location>
        <position position="438"/>
    </location>
    <ligand>
        <name>L-glutamine</name>
        <dbReference type="ChEBI" id="CHEBI:58359"/>
    </ligand>
</feature>
<feature type="binding site" evidence="1">
    <location>
        <position position="457"/>
    </location>
    <ligand>
        <name>ATP</name>
        <dbReference type="ChEBI" id="CHEBI:30616"/>
    </ligand>
</feature>
<feature type="binding site" evidence="1">
    <location>
        <begin position="486"/>
        <end position="487"/>
    </location>
    <ligand>
        <name>ATP</name>
        <dbReference type="ChEBI" id="CHEBI:30616"/>
    </ligand>
</feature>
<feature type="binding site" evidence="1">
    <location>
        <begin position="494"/>
        <end position="496"/>
    </location>
    <ligand>
        <name>ATP</name>
        <dbReference type="ChEBI" id="CHEBI:30616"/>
    </ligand>
</feature>
<feature type="modified residue" description="N-acetylalanine" evidence="2">
    <location>
        <position position="2"/>
    </location>
</feature>
<feature type="modified residue" description="Phosphoserine" evidence="2">
    <location>
        <position position="70"/>
    </location>
</feature>
<feature type="modified residue" description="N6-acetyllysine" evidence="2">
    <location>
        <position position="309"/>
    </location>
</feature>
<feature type="modified residue" description="Phosphoserine" evidence="2">
    <location>
        <position position="495"/>
    </location>
</feature>
<sequence>MATPDSLALFTGLGLSENKARETLKNAALSTQLREAATQAQQTLGSTIDKATGTLLYGLASRLRDTRRLSFLVGYIANKKIHTELQLSAALEYVRSHPLDPIDTKDFEQECGVGVVVTPEQIEEAVEATINRHRPQLLVERYRFSMGLLMGEARAALRWADGKMIKNEVDMQVLHLLGPKMEADLEKKPKVAKARLEETDRKTAKDVVENGEVAGQTLSLMEQLRGEALKFHKPGENYKTPGYVTTPHTMDLLKQHLEITGGQVRTRFPPEPNGILHIGHAKAINFNFGYAKANNGICFLRFDDTNPEKEEAKFFTAIYDMVTWLGYTPYKVTYASDYFDQLYAWAVELIRRGQAYVCHQRGEELKGHNPLPSPWRDRPIEESLLLFEAMRKGKFAEGEATLRMKLVMEDGKMDPVAYRVKYTPHHRTGDKWCIYPTYDYTHCLCDSIEHITHSLCTKEFQARRSSYFWLCNALDVYCPVQWEYGRLNLHYAVVSKRKILQLVAAGAVRDWDDPRLFTLTALRRRGFPPEAINNFCARVGVTVAQTTMEPHLLEACVRDVLNDTAPRAMAVLEPLQVVITNFPAPKPLDIRVPNFPADETKGFHQVPFASTVFIERTDFKEESEPGYKRLAWGQPVGLRHTGYVIELQHVVRGSSGCVECLEVTCRRADAGEKPKAFIHWVSQPLVCEIRLYERLFQHKNPEDPVEVPGGFLSDLNPASLQVIKGALVDCSVALAKPFDKFQFERLGYFSVDPDSHQGQVVFNRTVTLKEDPGKV</sequence>
<protein>
    <recommendedName>
        <fullName>Glutamine--tRNA ligase</fullName>
        <ecNumber evidence="2">6.1.1.18</ecNumber>
    </recommendedName>
    <alternativeName>
        <fullName>Glutaminyl-tRNA synthetase</fullName>
        <shortName>GlnRS</shortName>
    </alternativeName>
</protein>
<comment type="function">
    <text evidence="2">Glutamine--tRNA ligase. Plays a critical role in brain development.</text>
</comment>
<comment type="catalytic activity">
    <reaction evidence="2">
        <text>tRNA(Gln) + L-glutamine + ATP = L-glutaminyl-tRNA(Gln) + AMP + diphosphate</text>
        <dbReference type="Rhea" id="RHEA:20121"/>
        <dbReference type="Rhea" id="RHEA-COMP:9662"/>
        <dbReference type="Rhea" id="RHEA-COMP:9681"/>
        <dbReference type="ChEBI" id="CHEBI:30616"/>
        <dbReference type="ChEBI" id="CHEBI:33019"/>
        <dbReference type="ChEBI" id="CHEBI:58359"/>
        <dbReference type="ChEBI" id="CHEBI:78442"/>
        <dbReference type="ChEBI" id="CHEBI:78521"/>
        <dbReference type="ChEBI" id="CHEBI:456215"/>
        <dbReference type="EC" id="6.1.1.18"/>
    </reaction>
</comment>
<comment type="subunit">
    <text evidence="2">Monomer. Part of a multisubunit complex that groups tRNA ligases for Arg (RARS1), Asp (DARS1), Gln (QARS1), Ile (IARS1), Leu (LARS1), Lys (KARS1), Met (MARS1) the bifunctional ligase for Glu and Pro (EPRS1) and the auxiliary subunits AIMP1/p43, AIMP2/p38 and EEF1E1/p18. Interacts with RARS1. Part of a complex composed of RARS1, QARS1 and AIMP1.</text>
</comment>
<comment type="subcellular location">
    <subcellularLocation>
        <location evidence="2">Cytoplasm</location>
        <location evidence="2">Cytosol</location>
    </subcellularLocation>
    <subcellularLocation>
        <location evidence="2">Cytoplasm</location>
    </subcellularLocation>
</comment>
<comment type="tissue specificity">
    <text evidence="4">Detected in dorsal root ganglia (at protein level). Detected in dorsal root ganglia.</text>
</comment>
<comment type="induction">
    <text evidence="4">Down-regulated after peripheral nerve injury.</text>
</comment>
<comment type="similarity">
    <text evidence="3">Belongs to the class-I aminoacyl-tRNA synthetase family.</text>
</comment>